<accession>A8BJ87</accession>
<proteinExistence type="inferred from homology"/>
<comment type="function">
    <text evidence="5">Component of the intraflagellar transport complex B (IFT-B) involved in flagellar assembly (Probable).</text>
</comment>
<comment type="subcellular location">
    <subcellularLocation>
        <location evidence="2">Cell projection</location>
        <location evidence="2">Cilium</location>
        <location evidence="2">Flagellum</location>
    </subcellularLocation>
    <subcellularLocation>
        <location evidence="2">Cytoplasm</location>
        <location evidence="2">Cytoskeleton</location>
        <location evidence="2">Flagellum axoneme</location>
    </subcellularLocation>
    <subcellularLocation>
        <location evidence="2">Cytoplasm</location>
        <location evidence="2">Cytoskeleton</location>
        <location evidence="2">Flagellum basal body</location>
    </subcellularLocation>
    <text evidence="2">Localizes to the cytoplasmic and membrane-bound portions of each of the eight axonemes, localizing particularly at the flagellar pores and at the distal flagellar tips. Localizes to the basal bodies.</text>
</comment>
<comment type="similarity">
    <text evidence="4">Belongs to the IFT172 family.</text>
</comment>
<sequence length="1960" mass="215414">MILSYSRNLYPQSTGEKIVMGIDWSPNSQKLGVLTADHSLYLFNDQGERQDKIGLRSTEVKSSNKDFIPLCGTFSPCSTLFVVGQSDKVAYIFRLGQLWTDKKSIVARIPMDDAVTAVSWPLSEATSELSPIIFGTASGNLYLYSFQSKSIQAFVSSACFASLASSKTTTADNQATPLSPMSSPIIKILPIPSMPQCFVAVAESGLAVYVDIKTQQLRAAARHSKAVTTACMIAQKTSHGRHYLVLADVMCKVTVYAVETSAALCVCNIKTPQNIPFTASTASPSGGGCIVANASGLHFLTLVNSQPVTVSYEASSSAVTVYQDSGKGFLPQITSIAWRPDVSVLTVGTSLGSVDNFTPTIGSYRYCGAEVVNSAPNRATINIPRFNGSKRFAAGSIDLHASMSSELRTVKAFPKHDFTSFVQNPSGYKSTNIYLLGIGDSSIVIYSLNDDTINEFRYNASLTDKFFFDVGACRTMVISNTLGEFTVCYLTTQSDPGCTFYKVDIYATMRGCVAPHASVISCYPIYEDAAGSLNRISKIRTVCLGEERTDVLVTDLMPPDMCDDFSDPIVVLFRTKTSRAVDWLFFGPSGNAVLLRDISGGVSILNITDYSITQLSTSVGNGVVQWADPFDVIVGQESPDAPLYVWYNPTDIEDAPEILQPPVPVDNESWSFSYVKSNPNNFSKITAGHVKNISVQAIMTTPSGRQTSVSLDTNLLLFNLLLDKHDILGACQLLSALQDNNARVTNRNLWQKLCSVALDSFNFIVASRCYAALGDLPLSITAREIHERVQNAKDGEAGMTHDRMNLYCQAQIALLNSDLDKYDGLMMSCGRIDEVLTLYKELNLYSRAEKICPESMINTLRTEAIQWLINSGQMTTAGMLLAQRGDVRGALDLLIQDRSYLSAFELAKRAMTSSADPSLAPIIELLIGKLEDSHHYSQAAVLCTLGSGRNHERALALFRKSHAFDEALELARQHLPHECLPIEREWAEWLFQTGQYDKATQHYLECMNQEMAVESAFRANNFKLVESLLMDIPAAETNAHLCFRLAEMKYISGDAAGAATWLLKADQPLLGLSAFICAGKFDEAIQFIRSNLPRQSYRELLVHEAKRIISLGSAPSNNPVQEKTKTLTSSGVFASSSGESSEKQNVQSFLNRMESLSHIRGVYSAIELLKLAGLYEDVADILQGNSMWDELYSFAKEHAASFSNYPDILRMVADAKRVKGDKKSCATILEELCMELYGLSGSSSGSSGGMGAATDGYTRLRTQASHLIQARRDVLLEASSMYCDLFMYLEAIRLCKRCGDMDALTDVCLLWVSSNANRSLLIQQLKQLNIIEPTLTKAADRGMWDVCTELSEYCPDPEAVRCDLFWRRGRKLEIEGRLKEAEEFYAKAGKHQEIVGMYLDTGKFEDAQQAAMEMTSNFERERAMRSIRESKARVLASEGKWREAEAEFIELGLVEDIISIYRSNQMWQDALRVAKEHGDSVLVENLSESYVKHDKLRSGLGTSASAFEPGAKADLGDGSGLAGRTKQHGSDVQTARSILEAGSSAGLRKMLMSAARSGSDVLFEVVLHRCAELASMVLNNDIQDSSIVEDIAIISPSIHNFEEIGSPHERVMSLAVAYLSKGVPLSVTTGTESKGTISLIISDVCNREQLLLVCRGVLSLAFVESEYVNRITKQETHGDGIFCRLRSILLSYRNMLLNTVRGTKAAETDKVNFIPGDQELSRCFEATHLIIQLAKLFIGAKTISSMRDIVLVSSSLVRYCDLLPVDRCFVVAGESCKQFVEISNGNSNAKVMEARTQYLNQCCVFLNKFIDLHEEISNHSRNLERIDISDLTGSGIPWTAQVPVNLYLSKSRADEVRAFILELTMDESTTTTQELPREPCPFGCGKPIWIGACSCINCRQVSPICAVTGCHVINPNTHMLPSSRACQICGCYARPAPWNSLITKSKNCPVCEEVGFPIGK</sequence>
<organism evidence="6">
    <name type="scientific">Giardia intestinalis (strain ATCC 50803 / WB clone C6)</name>
    <name type="common">Giardia lamblia</name>
    <dbReference type="NCBI Taxonomy" id="184922"/>
    <lineage>
        <taxon>Eukaryota</taxon>
        <taxon>Metamonada</taxon>
        <taxon>Diplomonadida</taxon>
        <taxon>Hexamitidae</taxon>
        <taxon>Giardiinae</taxon>
        <taxon>Giardia</taxon>
    </lineage>
</organism>
<evidence type="ECO:0000255" key="1"/>
<evidence type="ECO:0000269" key="2">
    <source>
    </source>
</evidence>
<evidence type="ECO:0000303" key="3">
    <source>
    </source>
</evidence>
<evidence type="ECO:0000305" key="4"/>
<evidence type="ECO:0000305" key="5">
    <source>
    </source>
</evidence>
<evidence type="ECO:0000312" key="6">
    <source>
        <dbReference type="EMBL" id="EDO79089.1"/>
    </source>
</evidence>
<evidence type="ECO:0000312" key="7">
    <source>
        <dbReference type="EMBL" id="KAE8304857.1"/>
    </source>
</evidence>
<evidence type="ECO:0000312" key="8">
    <source>
        <dbReference type="Proteomes" id="UP000001548"/>
    </source>
</evidence>
<protein>
    <recommendedName>
        <fullName evidence="3">Intraflagellar transport protein 172</fullName>
        <shortName evidence="3">IFT172</shortName>
    </recommendedName>
    <alternativeName>
        <fullName evidence="6">IFT complex B</fullName>
    </alternativeName>
    <alternativeName>
        <fullName evidence="7">Intraflagellar transport protein IFT172</fullName>
    </alternativeName>
</protein>
<dbReference type="EMBL" id="AACB02000020">
    <property type="protein sequence ID" value="EDO79089.1"/>
    <property type="molecule type" value="Genomic_DNA"/>
</dbReference>
<dbReference type="EMBL" id="AACB03000001">
    <property type="protein sequence ID" value="KAE8304857.1"/>
    <property type="molecule type" value="Genomic_DNA"/>
</dbReference>
<dbReference type="RefSeq" id="XP_001706763.1">
    <property type="nucleotide sequence ID" value="XM_001706711.1"/>
</dbReference>
<dbReference type="STRING" id="184922.A8BJ87"/>
<dbReference type="EnsemblProtists" id="EDO79089">
    <property type="protein sequence ID" value="EDO79089"/>
    <property type="gene ID" value="GL50803_17105"/>
</dbReference>
<dbReference type="GeneID" id="5699657"/>
<dbReference type="KEGG" id="gla:GL50803_0017105"/>
<dbReference type="VEuPathDB" id="GiardiaDB:GL50803_17105"/>
<dbReference type="HOGENOM" id="CLU_002716_0_0_1"/>
<dbReference type="OMA" id="ICPESMI"/>
<dbReference type="Proteomes" id="UP000001548">
    <property type="component" value="Chromosome 5"/>
</dbReference>
<dbReference type="GO" id="GO:0097729">
    <property type="term" value="C:9+2 motile cilium"/>
    <property type="evidence" value="ECO:0000314"/>
    <property type="project" value="UniProtKB"/>
</dbReference>
<dbReference type="GO" id="GO:0005930">
    <property type="term" value="C:axoneme"/>
    <property type="evidence" value="ECO:0000314"/>
    <property type="project" value="UniProtKB"/>
</dbReference>
<dbReference type="GO" id="GO:0036064">
    <property type="term" value="C:ciliary basal body"/>
    <property type="evidence" value="ECO:0000314"/>
    <property type="project" value="UniProtKB"/>
</dbReference>
<dbReference type="GO" id="GO:1990900">
    <property type="term" value="C:ciliary pocket collar"/>
    <property type="evidence" value="ECO:0000314"/>
    <property type="project" value="UniProtKB"/>
</dbReference>
<dbReference type="GO" id="GO:0097542">
    <property type="term" value="C:ciliary tip"/>
    <property type="evidence" value="ECO:0000314"/>
    <property type="project" value="UniProtKB"/>
</dbReference>
<dbReference type="GO" id="GO:0030992">
    <property type="term" value="C:intraciliary transport particle B"/>
    <property type="evidence" value="ECO:0000318"/>
    <property type="project" value="GO_Central"/>
</dbReference>
<dbReference type="GO" id="GO:0060271">
    <property type="term" value="P:cilium assembly"/>
    <property type="evidence" value="ECO:0000305"/>
    <property type="project" value="UniProtKB"/>
</dbReference>
<dbReference type="GO" id="GO:0042073">
    <property type="term" value="P:intraciliary transport"/>
    <property type="evidence" value="ECO:0000318"/>
    <property type="project" value="GO_Central"/>
</dbReference>
<dbReference type="GO" id="GO:0035735">
    <property type="term" value="P:intraciliary transport involved in cilium assembly"/>
    <property type="evidence" value="ECO:0000305"/>
    <property type="project" value="UniProtKB"/>
</dbReference>
<dbReference type="Gene3D" id="1.25.40.470">
    <property type="match status" value="1"/>
</dbReference>
<dbReference type="Gene3D" id="1.25.40.10">
    <property type="entry name" value="Tetratricopeptide repeat domain"/>
    <property type="match status" value="1"/>
</dbReference>
<dbReference type="Gene3D" id="2.130.10.10">
    <property type="entry name" value="YVTN repeat-like/Quinoprotein amine dehydrogenase"/>
    <property type="match status" value="1"/>
</dbReference>
<dbReference type="InterPro" id="IPR011990">
    <property type="entry name" value="TPR-like_helical_dom_sf"/>
</dbReference>
<dbReference type="InterPro" id="IPR015943">
    <property type="entry name" value="WD40/YVTN_repeat-like_dom_sf"/>
</dbReference>
<dbReference type="InterPro" id="IPR036322">
    <property type="entry name" value="WD40_repeat_dom_sf"/>
</dbReference>
<dbReference type="PANTHER" id="PTHR15722">
    <property type="entry name" value="IFT140/172-RELATED"/>
    <property type="match status" value="1"/>
</dbReference>
<dbReference type="PANTHER" id="PTHR15722:SF2">
    <property type="entry name" value="INTRAFLAGELLAR TRANSPORT PROTEIN 172 HOMOLOG"/>
    <property type="match status" value="1"/>
</dbReference>
<dbReference type="SUPFAM" id="SSF50978">
    <property type="entry name" value="WD40 repeat-like"/>
    <property type="match status" value="1"/>
</dbReference>
<name>IF172_GIAIC</name>
<gene>
    <name evidence="7" type="ORF">GL50803_0017105</name>
    <name evidence="6" type="ORF">GL50803_17105</name>
</gene>
<feature type="chain" id="PRO_0000459305" description="Intraflagellar transport protein 172">
    <location>
        <begin position="1"/>
        <end position="1960"/>
    </location>
</feature>
<feature type="repeat" description="WD 1" evidence="1">
    <location>
        <begin position="63"/>
        <end position="103"/>
    </location>
</feature>
<feature type="repeat" description="WD 2" evidence="1">
    <location>
        <begin position="328"/>
        <end position="367"/>
    </location>
</feature>
<feature type="repeat" description="TPR 1" evidence="1">
    <location>
        <begin position="1064"/>
        <end position="1098"/>
    </location>
</feature>
<feature type="repeat" description="TPR 2" evidence="1">
    <location>
        <begin position="1362"/>
        <end position="1395"/>
    </location>
</feature>
<feature type="repeat" description="TPR 3" evidence="1">
    <location>
        <begin position="1397"/>
        <end position="1428"/>
    </location>
</feature>
<keyword id="KW-0966">Cell projection</keyword>
<keyword id="KW-0969">Cilium</keyword>
<keyword id="KW-0970">Cilium biogenesis/degradation</keyword>
<keyword id="KW-0963">Cytoplasm</keyword>
<keyword id="KW-0206">Cytoskeleton</keyword>
<keyword id="KW-0282">Flagellum</keyword>
<keyword id="KW-1185">Reference proteome</keyword>
<keyword id="KW-0677">Repeat</keyword>
<keyword id="KW-0802">TPR repeat</keyword>
<keyword id="KW-0853">WD repeat</keyword>
<reference evidence="6 8" key="1">
    <citation type="journal article" date="2007" name="Science">
        <title>Genomic minimalism in the early diverging intestinal parasite Giardia lamblia.</title>
        <authorList>
            <person name="Morrison H.G."/>
            <person name="McArthur A.G."/>
            <person name="Gillin F.D."/>
            <person name="Aley S.B."/>
            <person name="Adam R.D."/>
            <person name="Olsen G.J."/>
            <person name="Best A.A."/>
            <person name="Cande W.Z."/>
            <person name="Chen F."/>
            <person name="Cipriano M.J."/>
            <person name="Davids B.J."/>
            <person name="Dawson S.C."/>
            <person name="Elmendorf H.G."/>
            <person name="Hehl A.B."/>
            <person name="Holder M.E."/>
            <person name="Huse S.M."/>
            <person name="Kim U.U."/>
            <person name="Lasek-Nesselquist E."/>
            <person name="Manning G."/>
            <person name="Nigam A."/>
            <person name="Nixon J.E.J."/>
            <person name="Palm D."/>
            <person name="Passamaneck N.E."/>
            <person name="Prabhu A."/>
            <person name="Reich C.I."/>
            <person name="Reiner D.S."/>
            <person name="Samuelson J."/>
            <person name="Svard S.G."/>
            <person name="Sogin M.L."/>
        </authorList>
    </citation>
    <scope>NUCLEOTIDE SEQUENCE [LARGE SCALE GENOMIC DNA]</scope>
    <source>
        <strain evidence="8">ATCC 50803 / WB clone C6</strain>
    </source>
</reference>
<reference evidence="7" key="2">
    <citation type="submission" date="2019-07" db="EMBL/GenBank/DDBJ databases">
        <title>New Giardia intestinalis WB genome in near-complete chromosomes.</title>
        <authorList>
            <person name="Xu F."/>
            <person name="Jex A."/>
            <person name="Svard S.G."/>
        </authorList>
    </citation>
    <scope>NUCLEOTIDE SEQUENCE [LARGE SCALE GENOMIC DNA]</scope>
    <source>
        <strain evidence="7">ATCC 50803 / WB clone C6</strain>
    </source>
</reference>
<reference key="3">
    <citation type="journal article" date="2019" name="Elife">
        <title>Length-dependent disassembly maintains four different flagellar lengths in Giardia.</title>
        <authorList>
            <person name="McInally S.G."/>
            <person name="Kondev J."/>
            <person name="Dawson S.C."/>
        </authorList>
    </citation>
    <scope>FUNCTION</scope>
    <scope>SUBCELLULAR LOCATION</scope>
    <source>
        <strain evidence="3">ATCC 50803 / WB clone C6</strain>
    </source>
</reference>